<feature type="chain" id="PRO_1000019061" description="1-deoxy-D-xylulose-5-phosphate synthase">
    <location>
        <begin position="1"/>
        <end position="627"/>
    </location>
</feature>
<feature type="binding site" evidence="1">
    <location>
        <position position="87"/>
    </location>
    <ligand>
        <name>thiamine diphosphate</name>
        <dbReference type="ChEBI" id="CHEBI:58937"/>
    </ligand>
</feature>
<feature type="binding site" evidence="1">
    <location>
        <begin position="128"/>
        <end position="130"/>
    </location>
    <ligand>
        <name>thiamine diphosphate</name>
        <dbReference type="ChEBI" id="CHEBI:58937"/>
    </ligand>
</feature>
<feature type="binding site" evidence="1">
    <location>
        <position position="159"/>
    </location>
    <ligand>
        <name>Mg(2+)</name>
        <dbReference type="ChEBI" id="CHEBI:18420"/>
    </ligand>
</feature>
<feature type="binding site" evidence="1">
    <location>
        <begin position="160"/>
        <end position="161"/>
    </location>
    <ligand>
        <name>thiamine diphosphate</name>
        <dbReference type="ChEBI" id="CHEBI:58937"/>
    </ligand>
</feature>
<feature type="binding site" evidence="1">
    <location>
        <position position="188"/>
    </location>
    <ligand>
        <name>Mg(2+)</name>
        <dbReference type="ChEBI" id="CHEBI:18420"/>
    </ligand>
</feature>
<feature type="binding site" evidence="1">
    <location>
        <position position="188"/>
    </location>
    <ligand>
        <name>thiamine diphosphate</name>
        <dbReference type="ChEBI" id="CHEBI:58937"/>
    </ligand>
</feature>
<feature type="binding site" evidence="1">
    <location>
        <position position="295"/>
    </location>
    <ligand>
        <name>thiamine diphosphate</name>
        <dbReference type="ChEBI" id="CHEBI:58937"/>
    </ligand>
</feature>
<feature type="binding site" evidence="1">
    <location>
        <position position="375"/>
    </location>
    <ligand>
        <name>thiamine diphosphate</name>
        <dbReference type="ChEBI" id="CHEBI:58937"/>
    </ligand>
</feature>
<comment type="function">
    <text evidence="1">Catalyzes the acyloin condensation reaction between C atoms 2 and 3 of pyruvate and glyceraldehyde 3-phosphate to yield 1-deoxy-D-xylulose-5-phosphate (DXP).</text>
</comment>
<comment type="catalytic activity">
    <reaction evidence="1">
        <text>D-glyceraldehyde 3-phosphate + pyruvate + H(+) = 1-deoxy-D-xylulose 5-phosphate + CO2</text>
        <dbReference type="Rhea" id="RHEA:12605"/>
        <dbReference type="ChEBI" id="CHEBI:15361"/>
        <dbReference type="ChEBI" id="CHEBI:15378"/>
        <dbReference type="ChEBI" id="CHEBI:16526"/>
        <dbReference type="ChEBI" id="CHEBI:57792"/>
        <dbReference type="ChEBI" id="CHEBI:59776"/>
        <dbReference type="EC" id="2.2.1.7"/>
    </reaction>
</comment>
<comment type="cofactor">
    <cofactor evidence="1">
        <name>Mg(2+)</name>
        <dbReference type="ChEBI" id="CHEBI:18420"/>
    </cofactor>
    <text evidence="1">Binds 1 Mg(2+) ion per subunit.</text>
</comment>
<comment type="cofactor">
    <cofactor evidence="1">
        <name>thiamine diphosphate</name>
        <dbReference type="ChEBI" id="CHEBI:58937"/>
    </cofactor>
    <text evidence="1">Binds 1 thiamine pyrophosphate per subunit.</text>
</comment>
<comment type="pathway">
    <text evidence="1">Metabolic intermediate biosynthesis; 1-deoxy-D-xylulose 5-phosphate biosynthesis; 1-deoxy-D-xylulose 5-phosphate from D-glyceraldehyde 3-phosphate and pyruvate: step 1/1.</text>
</comment>
<comment type="subunit">
    <text evidence="1">Homodimer.</text>
</comment>
<comment type="similarity">
    <text evidence="1">Belongs to the transketolase family. DXPS subfamily.</text>
</comment>
<keyword id="KW-0414">Isoprene biosynthesis</keyword>
<keyword id="KW-0460">Magnesium</keyword>
<keyword id="KW-0479">Metal-binding</keyword>
<keyword id="KW-0784">Thiamine biosynthesis</keyword>
<keyword id="KW-0786">Thiamine pyrophosphate</keyword>
<keyword id="KW-0808">Transferase</keyword>
<accession>A6V058</accession>
<gene>
    <name evidence="1" type="primary">dxs</name>
    <name type="ordered locus">PSPA7_1057</name>
</gene>
<sequence length="627" mass="68020">MPKTLHEIPRERPATPLLDRASSPAELRRLGEADLETLADELRQYLLYTVGQTGGHFGAGLGVVELTIALHYVFDTPDDRLVWDVGHQAYPHKILTERRELMGTLRQKDGLAAFPRRAESEYDTFGVGHSSTSISAALGMAIAARLQGKERKSVAVIGDGALTAGMAFEALNHASEVDADMLVILNDNDMSISHNVGGLSNYLAKILSSRTYSSMREGSKKVLSRLPGAWEIARRTEEYAKGMLVPGTLFEELGWNYIGPIDGHDLPTLVATLRNMRDMKGPQFLHVVTKKGKGFAPAELDPIGYHAITKLEAPGSAPKKTGGPKYSSVFGQWLCDMAAQDARLLGITPAMKEGSDLVAFSERYPERYFDVAIAEQHAVTLAAGMACEGMKPVVAIYSTFLQRAYDQLIHDVAVQHLDVLFAIDRAGLVGEDGPTHAGSFDISYLRCIPGMLVMTPSDEDELRKLLTTGYLFDGPAAVRYPRGSGPNHPIDPDLQPVEIGKGVVRRRGGKVALLVFGVQLAEAMKVAEGLDATVADMRFVKPLDEALVRELAGSHELLVSIEENAVMGGAGSAVGEFLAREGLEVPLLQLGLPDYYVEHAKPSEMLAECGLDAAGIEKAVRQRLDRQ</sequence>
<reference key="1">
    <citation type="submission" date="2007-06" db="EMBL/GenBank/DDBJ databases">
        <authorList>
            <person name="Dodson R.J."/>
            <person name="Harkins D."/>
            <person name="Paulsen I.T."/>
        </authorList>
    </citation>
    <scope>NUCLEOTIDE SEQUENCE [LARGE SCALE GENOMIC DNA]</scope>
    <source>
        <strain>DSM 24068 / PA7</strain>
    </source>
</reference>
<evidence type="ECO:0000255" key="1">
    <source>
        <dbReference type="HAMAP-Rule" id="MF_00315"/>
    </source>
</evidence>
<organism>
    <name type="scientific">Pseudomonas paraeruginosa (strain DSM 24068 / PA7)</name>
    <name type="common">Pseudomonas aeruginosa (strain PA7)</name>
    <dbReference type="NCBI Taxonomy" id="381754"/>
    <lineage>
        <taxon>Bacteria</taxon>
        <taxon>Pseudomonadati</taxon>
        <taxon>Pseudomonadota</taxon>
        <taxon>Gammaproteobacteria</taxon>
        <taxon>Pseudomonadales</taxon>
        <taxon>Pseudomonadaceae</taxon>
        <taxon>Pseudomonas</taxon>
        <taxon>Pseudomonas paraeruginosa</taxon>
    </lineage>
</organism>
<proteinExistence type="inferred from homology"/>
<protein>
    <recommendedName>
        <fullName evidence="1">1-deoxy-D-xylulose-5-phosphate synthase</fullName>
        <ecNumber evidence="1">2.2.1.7</ecNumber>
    </recommendedName>
    <alternativeName>
        <fullName evidence="1">1-deoxyxylulose-5-phosphate synthase</fullName>
        <shortName evidence="1">DXP synthase</shortName>
        <shortName evidence="1">DXPS</shortName>
    </alternativeName>
</protein>
<dbReference type="EC" id="2.2.1.7" evidence="1"/>
<dbReference type="EMBL" id="CP000744">
    <property type="protein sequence ID" value="ABR81948.1"/>
    <property type="molecule type" value="Genomic_DNA"/>
</dbReference>
<dbReference type="RefSeq" id="WP_012074389.1">
    <property type="nucleotide sequence ID" value="NC_009656.1"/>
</dbReference>
<dbReference type="SMR" id="A6V058"/>
<dbReference type="KEGG" id="pap:PSPA7_1057"/>
<dbReference type="HOGENOM" id="CLU_009227_1_4_6"/>
<dbReference type="UniPathway" id="UPA00064">
    <property type="reaction ID" value="UER00091"/>
</dbReference>
<dbReference type="Proteomes" id="UP000001582">
    <property type="component" value="Chromosome"/>
</dbReference>
<dbReference type="GO" id="GO:0005829">
    <property type="term" value="C:cytosol"/>
    <property type="evidence" value="ECO:0007669"/>
    <property type="project" value="TreeGrafter"/>
</dbReference>
<dbReference type="GO" id="GO:0008661">
    <property type="term" value="F:1-deoxy-D-xylulose-5-phosphate synthase activity"/>
    <property type="evidence" value="ECO:0007669"/>
    <property type="project" value="UniProtKB-UniRule"/>
</dbReference>
<dbReference type="GO" id="GO:0000287">
    <property type="term" value="F:magnesium ion binding"/>
    <property type="evidence" value="ECO:0007669"/>
    <property type="project" value="UniProtKB-UniRule"/>
</dbReference>
<dbReference type="GO" id="GO:0030976">
    <property type="term" value="F:thiamine pyrophosphate binding"/>
    <property type="evidence" value="ECO:0007669"/>
    <property type="project" value="UniProtKB-UniRule"/>
</dbReference>
<dbReference type="GO" id="GO:0052865">
    <property type="term" value="P:1-deoxy-D-xylulose 5-phosphate biosynthetic process"/>
    <property type="evidence" value="ECO:0007669"/>
    <property type="project" value="UniProtKB-UniPathway"/>
</dbReference>
<dbReference type="GO" id="GO:0019288">
    <property type="term" value="P:isopentenyl diphosphate biosynthetic process, methylerythritol 4-phosphate pathway"/>
    <property type="evidence" value="ECO:0007669"/>
    <property type="project" value="TreeGrafter"/>
</dbReference>
<dbReference type="GO" id="GO:0016114">
    <property type="term" value="P:terpenoid biosynthetic process"/>
    <property type="evidence" value="ECO:0007669"/>
    <property type="project" value="UniProtKB-UniRule"/>
</dbReference>
<dbReference type="GO" id="GO:0009228">
    <property type="term" value="P:thiamine biosynthetic process"/>
    <property type="evidence" value="ECO:0007669"/>
    <property type="project" value="UniProtKB-UniRule"/>
</dbReference>
<dbReference type="CDD" id="cd02007">
    <property type="entry name" value="TPP_DXS"/>
    <property type="match status" value="1"/>
</dbReference>
<dbReference type="CDD" id="cd07033">
    <property type="entry name" value="TPP_PYR_DXS_TK_like"/>
    <property type="match status" value="1"/>
</dbReference>
<dbReference type="FunFam" id="3.40.50.920:FF:000002">
    <property type="entry name" value="1-deoxy-D-xylulose-5-phosphate synthase"/>
    <property type="match status" value="1"/>
</dbReference>
<dbReference type="FunFam" id="3.40.50.970:FF:000005">
    <property type="entry name" value="1-deoxy-D-xylulose-5-phosphate synthase"/>
    <property type="match status" value="1"/>
</dbReference>
<dbReference type="Gene3D" id="3.40.50.920">
    <property type="match status" value="1"/>
</dbReference>
<dbReference type="Gene3D" id="3.40.50.970">
    <property type="match status" value="2"/>
</dbReference>
<dbReference type="HAMAP" id="MF_00315">
    <property type="entry name" value="DXP_synth"/>
    <property type="match status" value="1"/>
</dbReference>
<dbReference type="InterPro" id="IPR005477">
    <property type="entry name" value="Dxylulose-5-P_synthase"/>
</dbReference>
<dbReference type="InterPro" id="IPR029061">
    <property type="entry name" value="THDP-binding"/>
</dbReference>
<dbReference type="InterPro" id="IPR009014">
    <property type="entry name" value="Transketo_C/PFOR_II"/>
</dbReference>
<dbReference type="InterPro" id="IPR005475">
    <property type="entry name" value="Transketolase-like_Pyr-bd"/>
</dbReference>
<dbReference type="InterPro" id="IPR020826">
    <property type="entry name" value="Transketolase_BS"/>
</dbReference>
<dbReference type="InterPro" id="IPR033248">
    <property type="entry name" value="Transketolase_C"/>
</dbReference>
<dbReference type="NCBIfam" id="TIGR00204">
    <property type="entry name" value="dxs"/>
    <property type="match status" value="1"/>
</dbReference>
<dbReference type="NCBIfam" id="NF003933">
    <property type="entry name" value="PRK05444.2-2"/>
    <property type="match status" value="1"/>
</dbReference>
<dbReference type="PANTHER" id="PTHR43322">
    <property type="entry name" value="1-D-DEOXYXYLULOSE 5-PHOSPHATE SYNTHASE-RELATED"/>
    <property type="match status" value="1"/>
</dbReference>
<dbReference type="PANTHER" id="PTHR43322:SF5">
    <property type="entry name" value="1-DEOXY-D-XYLULOSE-5-PHOSPHATE SYNTHASE, CHLOROPLASTIC"/>
    <property type="match status" value="1"/>
</dbReference>
<dbReference type="Pfam" id="PF13292">
    <property type="entry name" value="DXP_synthase_N"/>
    <property type="match status" value="1"/>
</dbReference>
<dbReference type="Pfam" id="PF02779">
    <property type="entry name" value="Transket_pyr"/>
    <property type="match status" value="1"/>
</dbReference>
<dbReference type="Pfam" id="PF02780">
    <property type="entry name" value="Transketolase_C"/>
    <property type="match status" value="1"/>
</dbReference>
<dbReference type="SMART" id="SM00861">
    <property type="entry name" value="Transket_pyr"/>
    <property type="match status" value="1"/>
</dbReference>
<dbReference type="SUPFAM" id="SSF52518">
    <property type="entry name" value="Thiamin diphosphate-binding fold (THDP-binding)"/>
    <property type="match status" value="2"/>
</dbReference>
<dbReference type="SUPFAM" id="SSF52922">
    <property type="entry name" value="TK C-terminal domain-like"/>
    <property type="match status" value="1"/>
</dbReference>
<dbReference type="PROSITE" id="PS00802">
    <property type="entry name" value="TRANSKETOLASE_2"/>
    <property type="match status" value="1"/>
</dbReference>
<name>DXS_PSEP7</name>